<sequence>MTLNVYHIIFIHNLWYGMAHIITLPKRRNCSLSCPSRVRGPEHLAVDHTLSSPALAKPNLPVLSTPEPCSPPANPYPRHQIQFPQQYTPYCTHNEGFINSPHSQSYQYIHFIHISPLPRMNTTHVPEPHRTEQHTENQRHWRKILDIAPIVSIAFPAAMYFIFTKDSFEDSLFLRFITLLLPFSYSAVQYALLHTNWKSHNKPEGILQSMLYYTLNLLLLAFTIISILSIIAFTLAEWEGDDWENNDDPIIFSFILPSFTVPLTYLLSVSCRLVPGHIGFTDTGINVLIDILILLCSTGNLVPAFDEVKHCYYFAIISSILILIRLLREKHGPSEKSALPTAPWRVAILVLILIFAALIYLFMMWVSIDILSDHFALLARARSTPVSKPRQ</sequence>
<evidence type="ECO:0000305" key="1"/>
<organism>
    <name type="scientific">Encephalitozoon cuniculi (strain GB-M1)</name>
    <name type="common">Microsporidian parasite</name>
    <dbReference type="NCBI Taxonomy" id="284813"/>
    <lineage>
        <taxon>Eukaryota</taxon>
        <taxon>Fungi</taxon>
        <taxon>Fungi incertae sedis</taxon>
        <taxon>Microsporidia</taxon>
        <taxon>Unikaryonidae</taxon>
        <taxon>Encephalitozoon</taxon>
    </lineage>
</organism>
<accession>Q8SV60</accession>
<dbReference type="EMBL" id="AL590446">
    <property type="protein sequence ID" value="CAD25526.1"/>
    <property type="molecule type" value="Genomic_DNA"/>
</dbReference>
<dbReference type="RefSeq" id="NP_585922.1">
    <property type="nucleotide sequence ID" value="NM_001041544.1"/>
</dbReference>
<dbReference type="GeneID" id="859350"/>
<dbReference type="KEGG" id="ecu:ECU06_1650"/>
<dbReference type="VEuPathDB" id="MicrosporidiaDB:ECU06_1650"/>
<dbReference type="HOGENOM" id="CLU_059413_0_0_1"/>
<dbReference type="InParanoid" id="Q8SV60"/>
<dbReference type="Proteomes" id="UP000000819">
    <property type="component" value="Chromosome VI"/>
</dbReference>
<dbReference type="InterPro" id="IPR019081">
    <property type="entry name" value="UPF0328"/>
</dbReference>
<dbReference type="Pfam" id="PF09591">
    <property type="entry name" value="DUF2463"/>
    <property type="match status" value="1"/>
</dbReference>
<gene>
    <name type="ordered locus">ECU06_1650</name>
</gene>
<feature type="chain" id="PRO_0000223133" description="UPF0328 protein ECU06_1650">
    <location>
        <begin position="1"/>
        <end position="391"/>
    </location>
</feature>
<reference key="1">
    <citation type="journal article" date="2001" name="Nature">
        <title>Genome sequence and gene compaction of the eukaryote parasite Encephalitozoon cuniculi.</title>
        <authorList>
            <person name="Katinka M.D."/>
            <person name="Duprat S."/>
            <person name="Cornillot E."/>
            <person name="Metenier G."/>
            <person name="Thomarat F."/>
            <person name="Prensier G."/>
            <person name="Barbe V."/>
            <person name="Peyretaillade E."/>
            <person name="Brottier P."/>
            <person name="Wincker P."/>
            <person name="Delbac F."/>
            <person name="El Alaoui H."/>
            <person name="Peyret P."/>
            <person name="Saurin W."/>
            <person name="Gouy M."/>
            <person name="Weissenbach J."/>
            <person name="Vivares C.P."/>
        </authorList>
    </citation>
    <scope>NUCLEOTIDE SEQUENCE [LARGE SCALE GENOMIC DNA]</scope>
    <source>
        <strain>GB-M1</strain>
    </source>
</reference>
<proteinExistence type="inferred from homology"/>
<name>Y6G5_ENCCU</name>
<protein>
    <recommendedName>
        <fullName>UPF0328 protein ECU06_1650</fullName>
    </recommendedName>
</protein>
<keyword id="KW-1185">Reference proteome</keyword>
<comment type="similarity">
    <text evidence="1">Belongs to the UPF0328 family.</text>
</comment>